<protein>
    <recommendedName>
        <fullName evidence="2">Lipopolysaccharide core heptose(II) kinase WaaY</fullName>
        <ecNumber evidence="2">2.7.1.-</ecNumber>
    </recommendedName>
</protein>
<sequence>MIIEKKIKNYTVFVKKDGEKYIEIFKDFLSYNHQVIKVFRNIEDTKVVLINTDYGKYILKVFSPKVKNTERFFKSLVKGDYYEKLFHQTDRVRREGFAALNDFYLLAEIKTLRYVKTYVMIIEYIEGIELVDMPEISDEVRGKIKQSIYSLHQHGMVSGDPHKGNFILQGNEIRIIDLSGKRPSRQRKAKDRIDLERHYGIKNNVRDIGFYLLIYKKKLRNFLRRIKGKEKR</sequence>
<keyword id="KW-0067">ATP-binding</keyword>
<keyword id="KW-0418">Kinase</keyword>
<keyword id="KW-0448">Lipopolysaccharide biosynthesis</keyword>
<keyword id="KW-0547">Nucleotide-binding</keyword>
<keyword id="KW-1185">Reference proteome</keyword>
<keyword id="KW-0808">Transferase</keyword>
<evidence type="ECO:0000250" key="1">
    <source>
        <dbReference type="UniProtKB" id="P27240"/>
    </source>
</evidence>
<evidence type="ECO:0000250" key="2">
    <source>
        <dbReference type="UniProtKB" id="Q9ZIS7"/>
    </source>
</evidence>
<evidence type="ECO:0000269" key="3">
    <source>
    </source>
</evidence>
<evidence type="ECO:0000303" key="4">
    <source>
    </source>
</evidence>
<evidence type="ECO:0000305" key="5"/>
<feature type="chain" id="PRO_0000097289" description="Lipopolysaccharide core heptose(II) kinase WaaY">
    <location>
        <begin position="1"/>
        <end position="232"/>
    </location>
</feature>
<organism>
    <name type="scientific">Salmonella typhimurium (strain LT2 / SGSC1412 / ATCC 700720)</name>
    <dbReference type="NCBI Taxonomy" id="99287"/>
    <lineage>
        <taxon>Bacteria</taxon>
        <taxon>Pseudomonadati</taxon>
        <taxon>Pseudomonadota</taxon>
        <taxon>Gammaproteobacteria</taxon>
        <taxon>Enterobacterales</taxon>
        <taxon>Enterobacteriaceae</taxon>
        <taxon>Salmonella</taxon>
    </lineage>
</organism>
<accession>P26472</accession>
<accession>Q7BV71</accession>
<dbReference type="EC" id="2.7.1.-" evidence="2"/>
<dbReference type="EMBL" id="AF001397">
    <property type="protein sequence ID" value="AAB61279.1"/>
    <property type="molecule type" value="Genomic_DNA"/>
</dbReference>
<dbReference type="EMBL" id="AE006468">
    <property type="protein sequence ID" value="AAL22575.1"/>
    <property type="molecule type" value="Genomic_DNA"/>
</dbReference>
<dbReference type="EMBL" id="AF026386">
    <property type="protein sequence ID" value="AAC16410.1"/>
    <property type="molecule type" value="Genomic_DNA"/>
</dbReference>
<dbReference type="EMBL" id="M73826">
    <property type="protein sequence ID" value="AAA27209.1"/>
    <property type="molecule type" value="Genomic_DNA"/>
</dbReference>
<dbReference type="PIR" id="E41317">
    <property type="entry name" value="E41317"/>
</dbReference>
<dbReference type="RefSeq" id="NP_462616.1">
    <property type="nucleotide sequence ID" value="NC_003197.2"/>
</dbReference>
<dbReference type="RefSeq" id="WP_000582809.1">
    <property type="nucleotide sequence ID" value="NC_003197.2"/>
</dbReference>
<dbReference type="STRING" id="99287.STM3716"/>
<dbReference type="PaxDb" id="99287-STM3716"/>
<dbReference type="GeneID" id="1255240"/>
<dbReference type="KEGG" id="stm:STM3716"/>
<dbReference type="PATRIC" id="fig|99287.12.peg.3930"/>
<dbReference type="HOGENOM" id="CLU_103657_0_0_6"/>
<dbReference type="OMA" id="TWIIAEY"/>
<dbReference type="PhylomeDB" id="P26472"/>
<dbReference type="BioCyc" id="MetaCyc:STM3716-MONOMER"/>
<dbReference type="BioCyc" id="SENT99287:STM3716-MONOMER"/>
<dbReference type="UniPathway" id="UPA00958"/>
<dbReference type="Proteomes" id="UP000001014">
    <property type="component" value="Chromosome"/>
</dbReference>
<dbReference type="GO" id="GO:0005524">
    <property type="term" value="F:ATP binding"/>
    <property type="evidence" value="ECO:0007669"/>
    <property type="project" value="UniProtKB-KW"/>
</dbReference>
<dbReference type="GO" id="GO:0016301">
    <property type="term" value="F:kinase activity"/>
    <property type="evidence" value="ECO:0007669"/>
    <property type="project" value="UniProtKB-KW"/>
</dbReference>
<dbReference type="GO" id="GO:0009244">
    <property type="term" value="P:lipopolysaccharide core region biosynthetic process"/>
    <property type="evidence" value="ECO:0007669"/>
    <property type="project" value="UniProtKB-UniPathway"/>
</dbReference>
<dbReference type="InterPro" id="IPR011009">
    <property type="entry name" value="Kinase-like_dom_sf"/>
</dbReference>
<dbReference type="InterPro" id="IPR009330">
    <property type="entry name" value="LipoPS_heptP_kinase"/>
</dbReference>
<dbReference type="NCBIfam" id="NF007684">
    <property type="entry name" value="PRK10359.1"/>
    <property type="match status" value="1"/>
</dbReference>
<dbReference type="Pfam" id="PF06176">
    <property type="entry name" value="WaaY"/>
    <property type="match status" value="1"/>
</dbReference>
<dbReference type="SUPFAM" id="SSF56112">
    <property type="entry name" value="Protein kinase-like (PK-like)"/>
    <property type="match status" value="1"/>
</dbReference>
<gene>
    <name evidence="1" type="primary">waaY</name>
    <name evidence="4" type="synonym">rfaY</name>
    <name type="ordered locus">STM3716</name>
</gene>
<proteinExistence type="inferred from homology"/>
<name>WAAY_SALTY</name>
<comment type="function">
    <text evidence="2">Kinase involved in the biosynthesis of the core oligosaccharide region of lipopolysaccharide (LPS). Catalyzes the phosphorylation of the second heptose unit (HepII) of the inner core.</text>
</comment>
<comment type="catalytic activity">
    <reaction evidence="2">
        <text>alpha-D-Glc-(1-&gt;3)-[L-alpha-D-Hep-(1-&gt;7)]-L-alpha-D-Hep-(1-&gt;3)-4-O-PO3(2-)-L-alpha-D-Hep-(1-&gt;5)-[alpha-Kdo-(2-&gt;4)]-alpha-Kdo-(2-&gt;6)-lipid A + ATP = alpha-D-Glc-(1-&gt;3)-[L-alpha-D-Hep-(1-&gt;7)]-4-O-PO3(2-)-L-alpha-D-Hep-(1-&gt;3)-4-O-PO3(2-)-L-alpha-D-Hep-(1-&gt;5)-[alpha-Kdo-(2-&gt;4)]-alpha-Kdo-(2-&gt;6)-lipid A + ADP + H(+)</text>
        <dbReference type="Rhea" id="RHEA:29931"/>
        <dbReference type="ChEBI" id="CHEBI:15378"/>
        <dbReference type="ChEBI" id="CHEBI:30616"/>
        <dbReference type="ChEBI" id="CHEBI:61999"/>
        <dbReference type="ChEBI" id="CHEBI:62000"/>
        <dbReference type="ChEBI" id="CHEBI:456216"/>
    </reaction>
</comment>
<comment type="pathway">
    <text evidence="2">Bacterial outer membrane biogenesis; LPS core biosynthesis.</text>
</comment>
<comment type="disruption phenotype">
    <text evidence="3">Insertion mutant shows reduced intestinal colonization of 3-week-old chicks.</text>
</comment>
<comment type="similarity">
    <text evidence="5">Belongs to the protein kinase superfamily. RfaY/WaaY family.</text>
</comment>
<reference key="1">
    <citation type="journal article" date="1998" name="Infect. Immun.">
        <title>Identification of Salmonella typhimurium genes required for colonization of the chicken alimentary tract and for virulence in newly hatched chicks.</title>
        <authorList>
            <person name="Turner A.K."/>
            <person name="Lovell M.A."/>
            <person name="Hulme S.D."/>
            <person name="Zhang-Barber L."/>
            <person name="Barrow P.A."/>
        </authorList>
    </citation>
    <scope>NUCLEOTIDE SEQUENCE [GENOMIC DNA]</scope>
    <scope>DISRUPTION PHENOTYPE</scope>
    <source>
        <strain>F98</strain>
    </source>
</reference>
<reference key="2">
    <citation type="journal article" date="2001" name="Nature">
        <title>Complete genome sequence of Salmonella enterica serovar Typhimurium LT2.</title>
        <authorList>
            <person name="McClelland M."/>
            <person name="Sanderson K.E."/>
            <person name="Spieth J."/>
            <person name="Clifton S.W."/>
            <person name="Latreille P."/>
            <person name="Courtney L."/>
            <person name="Porwollik S."/>
            <person name="Ali J."/>
            <person name="Dante M."/>
            <person name="Du F."/>
            <person name="Hou S."/>
            <person name="Layman D."/>
            <person name="Leonard S."/>
            <person name="Nguyen C."/>
            <person name="Scott K."/>
            <person name="Holmes A."/>
            <person name="Grewal N."/>
            <person name="Mulvaney E."/>
            <person name="Ryan E."/>
            <person name="Sun H."/>
            <person name="Florea L."/>
            <person name="Miller W."/>
            <person name="Stoneking T."/>
            <person name="Nhan M."/>
            <person name="Waterston R."/>
            <person name="Wilson R.K."/>
        </authorList>
    </citation>
    <scope>NUCLEOTIDE SEQUENCE [LARGE SCALE GENOMIC DNA]</scope>
    <source>
        <strain>LT2 / SGSC1412 / ATCC 700720</strain>
    </source>
</reference>
<reference key="3">
    <citation type="journal article" date="1998" name="J. Biol. Chem.">
        <title>The assembly system for the lipopolysaccharide R2 core-type of Escherichia coli is a hybrid of those found in Escherichia coli K-12 and Salmonella enterica. Structure and function of the R2 WaaK and WaaL homologs.</title>
        <authorList>
            <person name="Heinrichs D.E."/>
            <person name="Monteiro M.A."/>
            <person name="Perry M.B."/>
            <person name="Whitfield C."/>
        </authorList>
    </citation>
    <scope>NUCLEOTIDE SEQUENCE [GENOMIC DNA] OF 1-93</scope>
    <source>
        <strain>LT2</strain>
    </source>
</reference>
<reference key="4">
    <citation type="journal article" date="1991" name="J. Bacteriol.">
        <title>Cloning, characterization, and DNA sequence of the rfaLK region for lipopolysaccharide synthesis in Salmonella typhimurium LT2.</title>
        <authorList>
            <person name="Maclachlan P.R."/>
            <person name="Kadam S.K."/>
            <person name="Sanderson K.E."/>
        </authorList>
    </citation>
    <scope>NUCLEOTIDE SEQUENCE [GENOMIC DNA] OF 84-232</scope>
    <source>
        <strain>LT2</strain>
    </source>
</reference>